<dbReference type="EC" id="2.7.7.8" evidence="1"/>
<dbReference type="EMBL" id="CP001131">
    <property type="protein sequence ID" value="ACG72400.1"/>
    <property type="molecule type" value="Genomic_DNA"/>
</dbReference>
<dbReference type="RefSeq" id="WP_012525225.1">
    <property type="nucleotide sequence ID" value="NC_011145.1"/>
</dbReference>
<dbReference type="SMR" id="B4UHG5"/>
<dbReference type="KEGG" id="ank:AnaeK_1167"/>
<dbReference type="HOGENOM" id="CLU_004217_2_2_7"/>
<dbReference type="OrthoDB" id="9804305at2"/>
<dbReference type="Proteomes" id="UP000001871">
    <property type="component" value="Chromosome"/>
</dbReference>
<dbReference type="GO" id="GO:0005829">
    <property type="term" value="C:cytosol"/>
    <property type="evidence" value="ECO:0007669"/>
    <property type="project" value="TreeGrafter"/>
</dbReference>
<dbReference type="GO" id="GO:0000175">
    <property type="term" value="F:3'-5'-RNA exonuclease activity"/>
    <property type="evidence" value="ECO:0007669"/>
    <property type="project" value="TreeGrafter"/>
</dbReference>
<dbReference type="GO" id="GO:0000287">
    <property type="term" value="F:magnesium ion binding"/>
    <property type="evidence" value="ECO:0007669"/>
    <property type="project" value="UniProtKB-UniRule"/>
</dbReference>
<dbReference type="GO" id="GO:0004654">
    <property type="term" value="F:polyribonucleotide nucleotidyltransferase activity"/>
    <property type="evidence" value="ECO:0007669"/>
    <property type="project" value="UniProtKB-UniRule"/>
</dbReference>
<dbReference type="GO" id="GO:0003723">
    <property type="term" value="F:RNA binding"/>
    <property type="evidence" value="ECO:0007669"/>
    <property type="project" value="UniProtKB-UniRule"/>
</dbReference>
<dbReference type="GO" id="GO:0006402">
    <property type="term" value="P:mRNA catabolic process"/>
    <property type="evidence" value="ECO:0007669"/>
    <property type="project" value="UniProtKB-UniRule"/>
</dbReference>
<dbReference type="GO" id="GO:0006396">
    <property type="term" value="P:RNA processing"/>
    <property type="evidence" value="ECO:0007669"/>
    <property type="project" value="InterPro"/>
</dbReference>
<dbReference type="CDD" id="cd02393">
    <property type="entry name" value="KH-I_PNPase"/>
    <property type="match status" value="1"/>
</dbReference>
<dbReference type="CDD" id="cd11363">
    <property type="entry name" value="RNase_PH_PNPase_1"/>
    <property type="match status" value="1"/>
</dbReference>
<dbReference type="CDD" id="cd11364">
    <property type="entry name" value="RNase_PH_PNPase_2"/>
    <property type="match status" value="1"/>
</dbReference>
<dbReference type="CDD" id="cd04472">
    <property type="entry name" value="S1_PNPase"/>
    <property type="match status" value="1"/>
</dbReference>
<dbReference type="FunFam" id="2.40.50.140:FF:000023">
    <property type="entry name" value="Polyribonucleotide nucleotidyltransferase"/>
    <property type="match status" value="1"/>
</dbReference>
<dbReference type="FunFam" id="3.30.1370.10:FF:000001">
    <property type="entry name" value="Polyribonucleotide nucleotidyltransferase"/>
    <property type="match status" value="1"/>
</dbReference>
<dbReference type="FunFam" id="3.30.230.70:FF:000001">
    <property type="entry name" value="Polyribonucleotide nucleotidyltransferase"/>
    <property type="match status" value="1"/>
</dbReference>
<dbReference type="FunFam" id="3.30.230.70:FF:000002">
    <property type="entry name" value="Polyribonucleotide nucleotidyltransferase"/>
    <property type="match status" value="1"/>
</dbReference>
<dbReference type="Gene3D" id="3.30.230.70">
    <property type="entry name" value="GHMP Kinase, N-terminal domain"/>
    <property type="match status" value="2"/>
</dbReference>
<dbReference type="Gene3D" id="3.30.1370.10">
    <property type="entry name" value="K Homology domain, type 1"/>
    <property type="match status" value="1"/>
</dbReference>
<dbReference type="Gene3D" id="2.40.50.140">
    <property type="entry name" value="Nucleic acid-binding proteins"/>
    <property type="match status" value="1"/>
</dbReference>
<dbReference type="HAMAP" id="MF_01595">
    <property type="entry name" value="PNPase"/>
    <property type="match status" value="1"/>
</dbReference>
<dbReference type="InterPro" id="IPR001247">
    <property type="entry name" value="ExoRNase_PH_dom1"/>
</dbReference>
<dbReference type="InterPro" id="IPR015847">
    <property type="entry name" value="ExoRNase_PH_dom2"/>
</dbReference>
<dbReference type="InterPro" id="IPR036345">
    <property type="entry name" value="ExoRNase_PH_dom2_sf"/>
</dbReference>
<dbReference type="InterPro" id="IPR004087">
    <property type="entry name" value="KH_dom"/>
</dbReference>
<dbReference type="InterPro" id="IPR004088">
    <property type="entry name" value="KH_dom_type_1"/>
</dbReference>
<dbReference type="InterPro" id="IPR036612">
    <property type="entry name" value="KH_dom_type_1_sf"/>
</dbReference>
<dbReference type="InterPro" id="IPR012340">
    <property type="entry name" value="NA-bd_OB-fold"/>
</dbReference>
<dbReference type="InterPro" id="IPR012162">
    <property type="entry name" value="PNPase"/>
</dbReference>
<dbReference type="InterPro" id="IPR027408">
    <property type="entry name" value="PNPase/RNase_PH_dom_sf"/>
</dbReference>
<dbReference type="InterPro" id="IPR015848">
    <property type="entry name" value="PNPase_PH_RNA-bd_bac/org-type"/>
</dbReference>
<dbReference type="InterPro" id="IPR036456">
    <property type="entry name" value="PNPase_PH_RNA-bd_sf"/>
</dbReference>
<dbReference type="InterPro" id="IPR020568">
    <property type="entry name" value="Ribosomal_Su5_D2-typ_SF"/>
</dbReference>
<dbReference type="InterPro" id="IPR003029">
    <property type="entry name" value="S1_domain"/>
</dbReference>
<dbReference type="NCBIfam" id="TIGR03591">
    <property type="entry name" value="polynuc_phos"/>
    <property type="match status" value="1"/>
</dbReference>
<dbReference type="NCBIfam" id="NF008805">
    <property type="entry name" value="PRK11824.1"/>
    <property type="match status" value="1"/>
</dbReference>
<dbReference type="PANTHER" id="PTHR11252">
    <property type="entry name" value="POLYRIBONUCLEOTIDE NUCLEOTIDYLTRANSFERASE"/>
    <property type="match status" value="1"/>
</dbReference>
<dbReference type="PANTHER" id="PTHR11252:SF0">
    <property type="entry name" value="POLYRIBONUCLEOTIDE NUCLEOTIDYLTRANSFERASE 1, MITOCHONDRIAL"/>
    <property type="match status" value="1"/>
</dbReference>
<dbReference type="Pfam" id="PF00013">
    <property type="entry name" value="KH_1"/>
    <property type="match status" value="1"/>
</dbReference>
<dbReference type="Pfam" id="PF03726">
    <property type="entry name" value="PNPase"/>
    <property type="match status" value="1"/>
</dbReference>
<dbReference type="Pfam" id="PF01138">
    <property type="entry name" value="RNase_PH"/>
    <property type="match status" value="2"/>
</dbReference>
<dbReference type="Pfam" id="PF03725">
    <property type="entry name" value="RNase_PH_C"/>
    <property type="match status" value="2"/>
</dbReference>
<dbReference type="Pfam" id="PF00575">
    <property type="entry name" value="S1"/>
    <property type="match status" value="1"/>
</dbReference>
<dbReference type="PIRSF" id="PIRSF005499">
    <property type="entry name" value="PNPase"/>
    <property type="match status" value="1"/>
</dbReference>
<dbReference type="SMART" id="SM00322">
    <property type="entry name" value="KH"/>
    <property type="match status" value="1"/>
</dbReference>
<dbReference type="SMART" id="SM00316">
    <property type="entry name" value="S1"/>
    <property type="match status" value="1"/>
</dbReference>
<dbReference type="SUPFAM" id="SSF54791">
    <property type="entry name" value="Eukaryotic type KH-domain (KH-domain type I)"/>
    <property type="match status" value="1"/>
</dbReference>
<dbReference type="SUPFAM" id="SSF50249">
    <property type="entry name" value="Nucleic acid-binding proteins"/>
    <property type="match status" value="1"/>
</dbReference>
<dbReference type="SUPFAM" id="SSF46915">
    <property type="entry name" value="Polynucleotide phosphorylase/guanosine pentaphosphate synthase (PNPase/GPSI), domain 3"/>
    <property type="match status" value="1"/>
</dbReference>
<dbReference type="SUPFAM" id="SSF55666">
    <property type="entry name" value="Ribonuclease PH domain 2-like"/>
    <property type="match status" value="2"/>
</dbReference>
<dbReference type="SUPFAM" id="SSF54211">
    <property type="entry name" value="Ribosomal protein S5 domain 2-like"/>
    <property type="match status" value="2"/>
</dbReference>
<dbReference type="PROSITE" id="PS50084">
    <property type="entry name" value="KH_TYPE_1"/>
    <property type="match status" value="1"/>
</dbReference>
<dbReference type="PROSITE" id="PS50126">
    <property type="entry name" value="S1"/>
    <property type="match status" value="1"/>
</dbReference>
<reference key="1">
    <citation type="submission" date="2008-08" db="EMBL/GenBank/DDBJ databases">
        <title>Complete sequence of Anaeromyxobacter sp. K.</title>
        <authorList>
            <consortium name="US DOE Joint Genome Institute"/>
            <person name="Lucas S."/>
            <person name="Copeland A."/>
            <person name="Lapidus A."/>
            <person name="Glavina del Rio T."/>
            <person name="Dalin E."/>
            <person name="Tice H."/>
            <person name="Bruce D."/>
            <person name="Goodwin L."/>
            <person name="Pitluck S."/>
            <person name="Saunders E."/>
            <person name="Brettin T."/>
            <person name="Detter J.C."/>
            <person name="Han C."/>
            <person name="Larimer F."/>
            <person name="Land M."/>
            <person name="Hauser L."/>
            <person name="Kyrpides N."/>
            <person name="Ovchinnikiva G."/>
            <person name="Beliaev A."/>
        </authorList>
    </citation>
    <scope>NUCLEOTIDE SEQUENCE [LARGE SCALE GENOMIC DNA]</scope>
    <source>
        <strain>K</strain>
    </source>
</reference>
<accession>B4UHG5</accession>
<name>PNP_ANASK</name>
<organism>
    <name type="scientific">Anaeromyxobacter sp. (strain K)</name>
    <dbReference type="NCBI Taxonomy" id="447217"/>
    <lineage>
        <taxon>Bacteria</taxon>
        <taxon>Pseudomonadati</taxon>
        <taxon>Myxococcota</taxon>
        <taxon>Myxococcia</taxon>
        <taxon>Myxococcales</taxon>
        <taxon>Cystobacterineae</taxon>
        <taxon>Anaeromyxobacteraceae</taxon>
        <taxon>Anaeromyxobacter</taxon>
    </lineage>
</organism>
<protein>
    <recommendedName>
        <fullName evidence="1">Polyribonucleotide nucleotidyltransferase</fullName>
        <ecNumber evidence="1">2.7.7.8</ecNumber>
    </recommendedName>
    <alternativeName>
        <fullName evidence="1">Polynucleotide phosphorylase</fullName>
        <shortName evidence="1">PNPase</shortName>
    </alternativeName>
</protein>
<keyword id="KW-0963">Cytoplasm</keyword>
<keyword id="KW-0460">Magnesium</keyword>
<keyword id="KW-0479">Metal-binding</keyword>
<keyword id="KW-0548">Nucleotidyltransferase</keyword>
<keyword id="KW-0694">RNA-binding</keyword>
<keyword id="KW-0808">Transferase</keyword>
<feature type="chain" id="PRO_1000147880" description="Polyribonucleotide nucleotidyltransferase">
    <location>
        <begin position="1"/>
        <end position="721"/>
    </location>
</feature>
<feature type="domain" description="KH" evidence="1">
    <location>
        <begin position="562"/>
        <end position="621"/>
    </location>
</feature>
<feature type="domain" description="S1 motif" evidence="1">
    <location>
        <begin position="631"/>
        <end position="699"/>
    </location>
</feature>
<feature type="region of interest" description="Disordered" evidence="2">
    <location>
        <begin position="699"/>
        <end position="721"/>
    </location>
</feature>
<feature type="binding site" evidence="1">
    <location>
        <position position="495"/>
    </location>
    <ligand>
        <name>Mg(2+)</name>
        <dbReference type="ChEBI" id="CHEBI:18420"/>
    </ligand>
</feature>
<feature type="binding site" evidence="1">
    <location>
        <position position="501"/>
    </location>
    <ligand>
        <name>Mg(2+)</name>
        <dbReference type="ChEBI" id="CHEBI:18420"/>
    </ligand>
</feature>
<sequence length="721" mass="77861">MTPIQKTATVGGKDILLETGKVAKQAHGSVWVRLGDSIVLVTAVSAAEKKEGIDFFPLTVDYQEKLFAAGRVPGSFFRREGRPTEKETLTSRLVDRSCRPLFAEGYSNETQVIATVISFDQENDTDVLALTGASAALHISDIPFGGPIAGVRVARVGGQLVANPTLAQRAEADLDVVMAASRDAIVMVEGGAQEVSEAVMIEALLFGQAAVQPLLDAQDALRAATGNKARRSFDPPKNDVELRAKVKALTWEKVKEAYGRNEKHDRYGRLSEIKKELLQALKDEAAGDAAKLATIALREKEIKGYYEDVKYDYMRKMITDERRRIGGRGMADIRKITCEVGLLPRVHGSSLFTRGETQALVATTLGTAEDEQRVEMLTGMVFKKFMLHYNFPPFSVGEVKFLRSPGRREIGHGALAERALRAVMPPEDQFPYTVRVVSDIMESNGSSSMASVCGGCLSLMDAGVPIKAPVAGIAMGLIKEGEKIAILSDILGDEDHLGDMDFKVCGTAAGITSIQMDIKIGGVTRDILEQALAQAAEGRKHILGEMAKALSAPRGSISAYAPRITTIKIRPERIKDIIGPGGKTIKDITARTGTSINIEDDGSVSIASPNQDKVEEAIKMIRGLTQEAEVGRIYLGTVRKIAEFGAFVEIFPGTDGLIHISELSDKRVKSVSDVLSEGEEVMVKVISVDRSGKIRLSRKEALADSAKKSEGTEPPKGEPAK</sequence>
<proteinExistence type="inferred from homology"/>
<evidence type="ECO:0000255" key="1">
    <source>
        <dbReference type="HAMAP-Rule" id="MF_01595"/>
    </source>
</evidence>
<evidence type="ECO:0000256" key="2">
    <source>
        <dbReference type="SAM" id="MobiDB-lite"/>
    </source>
</evidence>
<gene>
    <name evidence="1" type="primary">pnp</name>
    <name type="ordered locus">AnaeK_1167</name>
</gene>
<comment type="function">
    <text evidence="1">Involved in mRNA degradation. Catalyzes the phosphorolysis of single-stranded polyribonucleotides processively in the 3'- to 5'-direction.</text>
</comment>
<comment type="catalytic activity">
    <reaction evidence="1">
        <text>RNA(n+1) + phosphate = RNA(n) + a ribonucleoside 5'-diphosphate</text>
        <dbReference type="Rhea" id="RHEA:22096"/>
        <dbReference type="Rhea" id="RHEA-COMP:14527"/>
        <dbReference type="Rhea" id="RHEA-COMP:17342"/>
        <dbReference type="ChEBI" id="CHEBI:43474"/>
        <dbReference type="ChEBI" id="CHEBI:57930"/>
        <dbReference type="ChEBI" id="CHEBI:140395"/>
        <dbReference type="EC" id="2.7.7.8"/>
    </reaction>
</comment>
<comment type="cofactor">
    <cofactor evidence="1">
        <name>Mg(2+)</name>
        <dbReference type="ChEBI" id="CHEBI:18420"/>
    </cofactor>
</comment>
<comment type="subcellular location">
    <subcellularLocation>
        <location evidence="1">Cytoplasm</location>
    </subcellularLocation>
</comment>
<comment type="similarity">
    <text evidence="1">Belongs to the polyribonucleotide nucleotidyltransferase family.</text>
</comment>